<name>EFTS_PARUW</name>
<organism>
    <name type="scientific">Protochlamydia amoebophila (strain UWE25)</name>
    <dbReference type="NCBI Taxonomy" id="264201"/>
    <lineage>
        <taxon>Bacteria</taxon>
        <taxon>Pseudomonadati</taxon>
        <taxon>Chlamydiota</taxon>
        <taxon>Chlamydiia</taxon>
        <taxon>Parachlamydiales</taxon>
        <taxon>Parachlamydiaceae</taxon>
        <taxon>Candidatus Protochlamydia</taxon>
    </lineage>
</organism>
<keyword id="KW-0963">Cytoplasm</keyword>
<keyword id="KW-0251">Elongation factor</keyword>
<keyword id="KW-0648">Protein biosynthesis</keyword>
<keyword id="KW-1185">Reference proteome</keyword>
<gene>
    <name evidence="1" type="primary">tsf</name>
    <name type="ordered locus">pc0137</name>
</gene>
<proteinExistence type="inferred from homology"/>
<reference key="1">
    <citation type="journal article" date="2004" name="Science">
        <title>Illuminating the evolutionary history of chlamydiae.</title>
        <authorList>
            <person name="Horn M."/>
            <person name="Collingro A."/>
            <person name="Schmitz-Esser S."/>
            <person name="Beier C.L."/>
            <person name="Purkhold U."/>
            <person name="Fartmann B."/>
            <person name="Brandt P."/>
            <person name="Nyakatura G.J."/>
            <person name="Droege M."/>
            <person name="Frishman D."/>
            <person name="Rattei T."/>
            <person name="Mewes H.-W."/>
            <person name="Wagner M."/>
        </authorList>
    </citation>
    <scope>NUCLEOTIDE SEQUENCE [LARGE SCALE GENOMIC DNA]</scope>
    <source>
        <strain>UWE25</strain>
    </source>
</reference>
<sequence length="282" mass="31152">MAAVTPALIKELRERTGVGMGKCKEALEEANGDMELAIANLRKAGMASAVKKEGRETKEGMIGTAENEKTIAIVEVNAETDFVVKNERFKEFLENIAREVANTNPSSLDAFLQQKYSKESSLTVDQYRATIVQTIGENIQIKRIMTLQKSPERSFGIYSHLGGKIVTMVEITGSNQEEALAKDIAMHIAATAPDYLSPEKIPQEIITSEKDIAKGQIQGKPANIVDKIVEGKINAFYDTNCLVRQKYIKDDSLSITDLVNQRSKVVGKELAVTNFIRWNVGQ</sequence>
<comment type="function">
    <text evidence="1">Associates with the EF-Tu.GDP complex and induces the exchange of GDP to GTP. It remains bound to the aminoacyl-tRNA.EF-Tu.GTP complex up to the GTP hydrolysis stage on the ribosome.</text>
</comment>
<comment type="subcellular location">
    <subcellularLocation>
        <location evidence="1">Cytoplasm</location>
    </subcellularLocation>
</comment>
<comment type="similarity">
    <text evidence="1">Belongs to the EF-Ts family.</text>
</comment>
<comment type="sequence caution" evidence="2">
    <conflict type="erroneous initiation">
        <sequence resource="EMBL-CDS" id="CAF22861"/>
    </conflict>
</comment>
<protein>
    <recommendedName>
        <fullName evidence="1">Elongation factor Ts</fullName>
        <shortName evidence="1">EF-Ts</shortName>
    </recommendedName>
</protein>
<feature type="chain" id="PRO_0000161167" description="Elongation factor Ts">
    <location>
        <begin position="1"/>
        <end position="282"/>
    </location>
</feature>
<feature type="region of interest" description="Involved in Mg(2+) ion dislocation from EF-Tu" evidence="1">
    <location>
        <begin position="80"/>
        <end position="83"/>
    </location>
</feature>
<dbReference type="EMBL" id="BX908798">
    <property type="protein sequence ID" value="CAF22861.1"/>
    <property type="status" value="ALT_INIT"/>
    <property type="molecule type" value="Genomic_DNA"/>
</dbReference>
<dbReference type="RefSeq" id="WP_011174687.1">
    <property type="nucleotide sequence ID" value="NC_005861.2"/>
</dbReference>
<dbReference type="SMR" id="Q6MEY8"/>
<dbReference type="STRING" id="264201.pc0137"/>
<dbReference type="eggNOG" id="COG0264">
    <property type="taxonomic scope" value="Bacteria"/>
</dbReference>
<dbReference type="HOGENOM" id="CLU_047155_0_0_0"/>
<dbReference type="OrthoDB" id="9808348at2"/>
<dbReference type="Proteomes" id="UP000000529">
    <property type="component" value="Chromosome"/>
</dbReference>
<dbReference type="GO" id="GO:0005737">
    <property type="term" value="C:cytoplasm"/>
    <property type="evidence" value="ECO:0007669"/>
    <property type="project" value="UniProtKB-SubCell"/>
</dbReference>
<dbReference type="GO" id="GO:0003746">
    <property type="term" value="F:translation elongation factor activity"/>
    <property type="evidence" value="ECO:0007669"/>
    <property type="project" value="UniProtKB-UniRule"/>
</dbReference>
<dbReference type="CDD" id="cd14275">
    <property type="entry name" value="UBA_EF-Ts"/>
    <property type="match status" value="1"/>
</dbReference>
<dbReference type="FunFam" id="1.10.8.10:FF:000001">
    <property type="entry name" value="Elongation factor Ts"/>
    <property type="match status" value="1"/>
</dbReference>
<dbReference type="Gene3D" id="1.10.286.20">
    <property type="match status" value="1"/>
</dbReference>
<dbReference type="Gene3D" id="1.10.8.10">
    <property type="entry name" value="DNA helicase RuvA subunit, C-terminal domain"/>
    <property type="match status" value="1"/>
</dbReference>
<dbReference type="Gene3D" id="3.30.479.20">
    <property type="entry name" value="Elongation factor Ts, dimerisation domain"/>
    <property type="match status" value="2"/>
</dbReference>
<dbReference type="HAMAP" id="MF_00050">
    <property type="entry name" value="EF_Ts"/>
    <property type="match status" value="1"/>
</dbReference>
<dbReference type="InterPro" id="IPR036402">
    <property type="entry name" value="EF-Ts_dimer_sf"/>
</dbReference>
<dbReference type="InterPro" id="IPR001816">
    <property type="entry name" value="Transl_elong_EFTs/EF1B"/>
</dbReference>
<dbReference type="InterPro" id="IPR014039">
    <property type="entry name" value="Transl_elong_EFTs/EF1B_dimer"/>
</dbReference>
<dbReference type="InterPro" id="IPR018101">
    <property type="entry name" value="Transl_elong_Ts_CS"/>
</dbReference>
<dbReference type="InterPro" id="IPR009060">
    <property type="entry name" value="UBA-like_sf"/>
</dbReference>
<dbReference type="NCBIfam" id="TIGR00116">
    <property type="entry name" value="tsf"/>
    <property type="match status" value="1"/>
</dbReference>
<dbReference type="PANTHER" id="PTHR11741">
    <property type="entry name" value="ELONGATION FACTOR TS"/>
    <property type="match status" value="1"/>
</dbReference>
<dbReference type="PANTHER" id="PTHR11741:SF0">
    <property type="entry name" value="ELONGATION FACTOR TS, MITOCHONDRIAL"/>
    <property type="match status" value="1"/>
</dbReference>
<dbReference type="Pfam" id="PF00889">
    <property type="entry name" value="EF_TS"/>
    <property type="match status" value="1"/>
</dbReference>
<dbReference type="SUPFAM" id="SSF54713">
    <property type="entry name" value="Elongation factor Ts (EF-Ts), dimerisation domain"/>
    <property type="match status" value="2"/>
</dbReference>
<dbReference type="SUPFAM" id="SSF46934">
    <property type="entry name" value="UBA-like"/>
    <property type="match status" value="1"/>
</dbReference>
<dbReference type="PROSITE" id="PS01126">
    <property type="entry name" value="EF_TS_1"/>
    <property type="match status" value="1"/>
</dbReference>
<accession>Q6MEY8</accession>
<evidence type="ECO:0000255" key="1">
    <source>
        <dbReference type="HAMAP-Rule" id="MF_00050"/>
    </source>
</evidence>
<evidence type="ECO:0000305" key="2"/>